<evidence type="ECO:0000250" key="1"/>
<evidence type="ECO:0000305" key="2"/>
<accession>P57845</accession>
<dbReference type="EMBL" id="AE004439">
    <property type="protein sequence ID" value="AAK02527.1"/>
    <property type="molecule type" value="Genomic_DNA"/>
</dbReference>
<dbReference type="RefSeq" id="WP_005726163.1">
    <property type="nucleotide sequence ID" value="NC_002663.1"/>
</dbReference>
<dbReference type="SMR" id="P57845"/>
<dbReference type="STRING" id="272843.PM0443"/>
<dbReference type="EnsemblBacteria" id="AAK02527">
    <property type="protein sequence ID" value="AAK02527"/>
    <property type="gene ID" value="PM0443"/>
</dbReference>
<dbReference type="GeneID" id="77206073"/>
<dbReference type="KEGG" id="pmu:PM0443"/>
<dbReference type="HOGENOM" id="CLU_067812_0_1_6"/>
<dbReference type="OrthoDB" id="9794530at2"/>
<dbReference type="Proteomes" id="UP000000809">
    <property type="component" value="Chromosome"/>
</dbReference>
<dbReference type="GO" id="GO:0000902">
    <property type="term" value="P:cell morphogenesis"/>
    <property type="evidence" value="ECO:0007669"/>
    <property type="project" value="InterPro"/>
</dbReference>
<dbReference type="GO" id="GO:0000917">
    <property type="term" value="P:division septum assembly"/>
    <property type="evidence" value="ECO:0007669"/>
    <property type="project" value="UniProtKB-KW"/>
</dbReference>
<dbReference type="GO" id="GO:0051302">
    <property type="term" value="P:regulation of cell division"/>
    <property type="evidence" value="ECO:0007669"/>
    <property type="project" value="InterPro"/>
</dbReference>
<dbReference type="GO" id="GO:1901891">
    <property type="term" value="P:regulation of cell septum assembly"/>
    <property type="evidence" value="ECO:0007669"/>
    <property type="project" value="InterPro"/>
</dbReference>
<dbReference type="Gene3D" id="2.160.20.70">
    <property type="match status" value="1"/>
</dbReference>
<dbReference type="Gene3D" id="3.30.70.260">
    <property type="match status" value="1"/>
</dbReference>
<dbReference type="HAMAP" id="MF_00267">
    <property type="entry name" value="MinC"/>
    <property type="match status" value="1"/>
</dbReference>
<dbReference type="InterPro" id="IPR016098">
    <property type="entry name" value="CAP/MinC_C"/>
</dbReference>
<dbReference type="InterPro" id="IPR013033">
    <property type="entry name" value="MinC"/>
</dbReference>
<dbReference type="InterPro" id="IPR036145">
    <property type="entry name" value="MinC_C_sf"/>
</dbReference>
<dbReference type="InterPro" id="IPR007874">
    <property type="entry name" value="MinC_N"/>
</dbReference>
<dbReference type="InterPro" id="IPR005526">
    <property type="entry name" value="Septum_form_inhib_MinC_C"/>
</dbReference>
<dbReference type="NCBIfam" id="TIGR01222">
    <property type="entry name" value="minC"/>
    <property type="match status" value="1"/>
</dbReference>
<dbReference type="PANTHER" id="PTHR34108">
    <property type="entry name" value="SEPTUM SITE-DETERMINING PROTEIN MINC"/>
    <property type="match status" value="1"/>
</dbReference>
<dbReference type="PANTHER" id="PTHR34108:SF1">
    <property type="entry name" value="SEPTUM SITE-DETERMINING PROTEIN MINC"/>
    <property type="match status" value="1"/>
</dbReference>
<dbReference type="Pfam" id="PF03775">
    <property type="entry name" value="MinC_C"/>
    <property type="match status" value="1"/>
</dbReference>
<dbReference type="Pfam" id="PF05209">
    <property type="entry name" value="MinC_N"/>
    <property type="match status" value="1"/>
</dbReference>
<dbReference type="SUPFAM" id="SSF63848">
    <property type="entry name" value="Cell-division inhibitor MinC, C-terminal domain"/>
    <property type="match status" value="1"/>
</dbReference>
<gene>
    <name type="primary">minC</name>
    <name type="ordered locus">PM0443</name>
</gene>
<name>MINC_PASMU</name>
<proteinExistence type="inferred from homology"/>
<comment type="function">
    <text evidence="1">Cell division inhibitor that blocks the formation of polar Z ring septums. Rapidly oscillates between the poles of the cell to destabilize FtsZ filaments that have formed before they mature into polar Z rings. Prevents FtsZ polymerization (By similarity).</text>
</comment>
<comment type="subunit">
    <text evidence="1">Interacts with MinD and FtsZ.</text>
</comment>
<comment type="similarity">
    <text evidence="2">Belongs to the MinC family.</text>
</comment>
<reference key="1">
    <citation type="journal article" date="2001" name="Proc. Natl. Acad. Sci. U.S.A.">
        <title>Complete genomic sequence of Pasteurella multocida Pm70.</title>
        <authorList>
            <person name="May B.J."/>
            <person name="Zhang Q."/>
            <person name="Li L.L."/>
            <person name="Paustian M.L."/>
            <person name="Whittam T.S."/>
            <person name="Kapur V."/>
        </authorList>
    </citation>
    <scope>NUCLEOTIDE SEQUENCE [LARGE SCALE GENOMIC DNA]</scope>
    <source>
        <strain>Pm70</strain>
    </source>
</reference>
<feature type="chain" id="PRO_0000189049" description="Probable septum site-determining protein MinC">
    <location>
        <begin position="1"/>
        <end position="225"/>
    </location>
</feature>
<sequence>MAQDIVAFRTGQFSSIFLTLHSSSLSVIKRALSKKIKSSPSIFQHIAVILQFTPELEKVNLQALKSLCEEFNIHIIGVSDWTNHLQKELIMTSGLALLGKSGEFTEILPEPRCLPVKIIHQHVASKQVIYAKNSDLIIHGNVEPGAEVAADGNVHIYGKLLGRAMAGVNNNVGSIYTQYLDAEFIAVSSRFLYKDNLPHEYQHEAVRIFADKDKLRFHFLLEKET</sequence>
<organism>
    <name type="scientific">Pasteurella multocida (strain Pm70)</name>
    <dbReference type="NCBI Taxonomy" id="272843"/>
    <lineage>
        <taxon>Bacteria</taxon>
        <taxon>Pseudomonadati</taxon>
        <taxon>Pseudomonadota</taxon>
        <taxon>Gammaproteobacteria</taxon>
        <taxon>Pasteurellales</taxon>
        <taxon>Pasteurellaceae</taxon>
        <taxon>Pasteurella</taxon>
    </lineage>
</organism>
<protein>
    <recommendedName>
        <fullName>Probable septum site-determining protein MinC</fullName>
    </recommendedName>
</protein>
<keyword id="KW-0131">Cell cycle</keyword>
<keyword id="KW-0132">Cell division</keyword>
<keyword id="KW-1185">Reference proteome</keyword>
<keyword id="KW-0717">Septation</keyword>